<feature type="signal peptide" evidence="2">
    <location>
        <begin position="1"/>
        <end position="31"/>
    </location>
</feature>
<feature type="chain" id="PRO_0000039300" description="Fusion glycoprotein F0">
    <location>
        <begin position="32"/>
        <end position="553"/>
    </location>
</feature>
<feature type="chain" id="PRO_0000039301" description="Fusion glycoprotein F2">
    <location>
        <begin position="32"/>
        <end position="116"/>
    </location>
</feature>
<feature type="chain" id="PRO_0000039302" description="Fusion glycoprotein F1">
    <location>
        <begin position="117"/>
        <end position="553"/>
    </location>
</feature>
<feature type="topological domain" description="Extracellular" evidence="1">
    <location>
        <begin position="32"/>
        <end position="500"/>
    </location>
</feature>
<feature type="transmembrane region" description="Helical" evidence="1">
    <location>
        <begin position="501"/>
        <end position="521"/>
    </location>
</feature>
<feature type="topological domain" description="Cytoplasmic" evidence="1">
    <location>
        <begin position="522"/>
        <end position="553"/>
    </location>
</feature>
<feature type="region of interest" description="Fusion peptide" evidence="1">
    <location>
        <begin position="117"/>
        <end position="141"/>
    </location>
</feature>
<feature type="coiled-coil region" evidence="2">
    <location>
        <begin position="142"/>
        <end position="170"/>
    </location>
</feature>
<feature type="coiled-coil region" evidence="2">
    <location>
        <begin position="466"/>
        <end position="491"/>
    </location>
</feature>
<feature type="site" description="Cleavage; by host" evidence="1">
    <location>
        <begin position="116"/>
        <end position="117"/>
    </location>
</feature>
<feature type="lipid moiety-binding region" description="S-palmitoyl cysteine; by host" evidence="2">
    <location>
        <position position="523"/>
    </location>
</feature>
<feature type="glycosylation site" description="N-linked (GlcNAc...) asparagine; by host" evidence="2">
    <location>
        <position position="85"/>
    </location>
</feature>
<feature type="glycosylation site" description="N-linked (GlcNAc...) asparagine; by host" evidence="2">
    <location>
        <position position="191"/>
    </location>
</feature>
<feature type="glycosylation site" description="N-linked (GlcNAc...) asparagine; by host" evidence="2">
    <location>
        <position position="366"/>
    </location>
</feature>
<feature type="glycosylation site" description="N-linked (GlcNAc...) asparagine; by host" evidence="2">
    <location>
        <position position="447"/>
    </location>
</feature>
<feature type="glycosylation site" description="N-linked (GlcNAc...) asparagine; by host" evidence="2">
    <location>
        <position position="471"/>
    </location>
</feature>
<feature type="disulfide bond" description="Interchain (between F2 and F1 chains)" evidence="1">
    <location>
        <begin position="76"/>
        <end position="199"/>
    </location>
</feature>
<feature type="disulfide bond" evidence="1">
    <location>
        <begin position="338"/>
        <end position="347"/>
    </location>
</feature>
<feature type="disulfide bond" evidence="1">
    <location>
        <begin position="362"/>
        <end position="370"/>
    </location>
</feature>
<feature type="disulfide bond" evidence="1">
    <location>
        <begin position="394"/>
        <end position="399"/>
    </location>
</feature>
<feature type="disulfide bond" evidence="1">
    <location>
        <begin position="401"/>
        <end position="424"/>
    </location>
</feature>
<name>FUS_NDVH3</name>
<accession>P33612</accession>
<reference key="1">
    <citation type="journal article" date="1989" name="Virology">
        <title>Newcastle disease virus evolution. II. Lack of gene recombination in generating virulent and avirulent strains.</title>
        <authorList>
            <person name="Toyoda T."/>
            <person name="Sakaguchi T."/>
            <person name="Hirota H."/>
            <person name="Gotoh B."/>
            <person name="Kuma K."/>
            <person name="Miyata T."/>
            <person name="Nagai Y."/>
        </authorList>
    </citation>
    <scope>NUCLEOTIDE SEQUENCE [GENOMIC RNA]</scope>
</reference>
<evidence type="ECO:0000250" key="1"/>
<evidence type="ECO:0000255" key="2"/>
<evidence type="ECO:0000305" key="3"/>
<sequence length="553" mass="59129">MGSRSSTRIPVPPMLIIRIVLTLSCIRLTSSLDGRPLAAAGIVVTGDKAVNIYTSSQTGSIIVKLLPNMPKDKEACAKAPLEAYNRTLTTLLTPLGDSIRRKQESVTTSGGRRQRRFIGAIIGSVALGVATAAQITAASALIQANQNAANILRLKESIAATNEAVHEVTDGLSQIAVAVGKMQQFVNDQFNNTAQELDCIKITQQVGVELNLYLTELTTVFGPQITSPALTQLTIQALYNLAGGNMDYLLTKLGVGNNQLSSLIGSGLITGNPILYDSQTQILGIQVTLPSVGNLNNMRATYLETLSVSTTKGFASALVPKVVTQVGSVIEELDTSYCIGTDLDLYCTRIVTFPMSPGIYSCLSGNTSACMYSKTEGALTTPYMALKGSVIANCKMTTCRCADPPGIISQNYGEAVSLIDRHSCNVLSLDGITLRLSGEFDATYQKNISILDSQVIVTGNLDISTELGNVNNSISNALNKLEESNSKLDKVNVRLTSTSALITYIVLTVISLVFGVLSLVLACYLMYKQKAQQKTLLWLGNNTLDQMRATTKI</sequence>
<organism>
    <name type="scientific">Newcastle disease virus (strain Her/33)</name>
    <name type="common">NDV</name>
    <dbReference type="NCBI Taxonomy" id="11187"/>
    <lineage>
        <taxon>Viruses</taxon>
        <taxon>Riboviria</taxon>
        <taxon>Orthornavirae</taxon>
        <taxon>Negarnaviricota</taxon>
        <taxon>Haploviricotina</taxon>
        <taxon>Monjiviricetes</taxon>
        <taxon>Mononegavirales</taxon>
        <taxon>Paramyxoviridae</taxon>
        <taxon>Avulavirinae</taxon>
        <taxon>Orthoavulavirus</taxon>
        <taxon>Orthoavulavirus javaense</taxon>
        <taxon>Avian paramyxovirus 1</taxon>
    </lineage>
</organism>
<keyword id="KW-0165">Cleavage on pair of basic residues</keyword>
<keyword id="KW-0175">Coiled coil</keyword>
<keyword id="KW-1015">Disulfide bond</keyword>
<keyword id="KW-1169">Fusion of virus membrane with host cell membrane</keyword>
<keyword id="KW-1168">Fusion of virus membrane with host membrane</keyword>
<keyword id="KW-0325">Glycoprotein</keyword>
<keyword id="KW-1032">Host cell membrane</keyword>
<keyword id="KW-1043">Host membrane</keyword>
<keyword id="KW-0449">Lipoprotein</keyword>
<keyword id="KW-0472">Membrane</keyword>
<keyword id="KW-0564">Palmitate</keyword>
<keyword id="KW-0732">Signal</keyword>
<keyword id="KW-0812">Transmembrane</keyword>
<keyword id="KW-1133">Transmembrane helix</keyword>
<keyword id="KW-0261">Viral envelope protein</keyword>
<keyword id="KW-1162">Viral penetration into host cytoplasm</keyword>
<keyword id="KW-0946">Virion</keyword>
<keyword id="KW-1160">Virus entry into host cell</keyword>
<organismHost>
    <name type="scientific">Gallus gallus</name>
    <name type="common">Chicken</name>
    <dbReference type="NCBI Taxonomy" id="9031"/>
</organismHost>
<gene>
    <name type="primary">F</name>
</gene>
<comment type="function">
    <text evidence="1">Class I viral fusion protein. Under the current model, the protein has at least 3 conformational states: pre-fusion native state, pre-hairpin intermediate state, and post-fusion hairpin state. During viral and plasma cell membrane fusion, the heptad repeat (HR) regions assume a trimer-of-hairpins structure, positioning the fusion peptide in close proximity to the C-terminal region of the ectodomain. The formation of this structure appears to drive apposition and subsequent fusion of viral and plasma cell membranes. Directs fusion of viral and cellular membranes leading to delivery of the nucleocapsid into the cytoplasm. This fusion is pH independent and occurs directly at the outer cell membrane. The trimer of F1-F2 (F protein) probably interacts with HN at the virion surface. Upon HN binding to its cellular receptor, the hydrophobic fusion peptide is unmasked and interacts with the cellular membrane, inducing the fusion between cell and virion membranes. Later in infection, F proteins expressed at the plasma membrane of infected cells could mediate fusion with adjacent cells to form syncytia, a cytopathic effect that could lead to tissue necrosis (By similarity).</text>
</comment>
<comment type="subunit">
    <text evidence="1">Homotrimer of disulfide-linked F1-F2.</text>
</comment>
<comment type="subcellular location">
    <subcellularLocation>
        <location evidence="1">Virion membrane</location>
        <topology evidence="1">Single-pass type I membrane protein</topology>
    </subcellularLocation>
    <subcellularLocation>
        <location evidence="1">Host cell membrane</location>
        <topology evidence="1">Single-pass membrane protein</topology>
    </subcellularLocation>
</comment>
<comment type="PTM">
    <text evidence="1">The inactive precursor F0 is glycosylated and proteolytically cleaved into F1 and F2 to be functionally active. The cleavage is mediated by cellular proteases during the transport and maturation of the polypeptide (By similarity).</text>
</comment>
<comment type="similarity">
    <text evidence="3">Belongs to the paramyxoviruses fusion glycoprotein family.</text>
</comment>
<protein>
    <recommendedName>
        <fullName>Fusion glycoprotein F0</fullName>
    </recommendedName>
    <component>
        <recommendedName>
            <fullName>Fusion glycoprotein F2</fullName>
        </recommendedName>
    </component>
    <component>
        <recommendedName>
            <fullName>Fusion glycoprotein F1</fullName>
        </recommendedName>
    </component>
</protein>
<dbReference type="EMBL" id="M24702">
    <property type="protein sequence ID" value="AAA46652.1"/>
    <property type="molecule type" value="Genomic_RNA"/>
</dbReference>
<dbReference type="PIR" id="A36830">
    <property type="entry name" value="A36830"/>
</dbReference>
<dbReference type="SMR" id="P33612"/>
<dbReference type="GlyCosmos" id="P33612">
    <property type="glycosylation" value="5 sites, No reported glycans"/>
</dbReference>
<dbReference type="GO" id="GO:0020002">
    <property type="term" value="C:host cell plasma membrane"/>
    <property type="evidence" value="ECO:0007669"/>
    <property type="project" value="UniProtKB-SubCell"/>
</dbReference>
<dbReference type="GO" id="GO:0016020">
    <property type="term" value="C:membrane"/>
    <property type="evidence" value="ECO:0007669"/>
    <property type="project" value="UniProtKB-KW"/>
</dbReference>
<dbReference type="GO" id="GO:0019031">
    <property type="term" value="C:viral envelope"/>
    <property type="evidence" value="ECO:0007669"/>
    <property type="project" value="UniProtKB-KW"/>
</dbReference>
<dbReference type="GO" id="GO:0055036">
    <property type="term" value="C:virion membrane"/>
    <property type="evidence" value="ECO:0007669"/>
    <property type="project" value="UniProtKB-SubCell"/>
</dbReference>
<dbReference type="GO" id="GO:0019064">
    <property type="term" value="P:fusion of virus membrane with host plasma membrane"/>
    <property type="evidence" value="ECO:0007669"/>
    <property type="project" value="UniProtKB-KW"/>
</dbReference>
<dbReference type="GO" id="GO:0046718">
    <property type="term" value="P:symbiont entry into host cell"/>
    <property type="evidence" value="ECO:0007669"/>
    <property type="project" value="UniProtKB-KW"/>
</dbReference>
<dbReference type="Gene3D" id="1.10.287.2480">
    <property type="match status" value="1"/>
</dbReference>
<dbReference type="Gene3D" id="6.10.10.110">
    <property type="match status" value="1"/>
</dbReference>
<dbReference type="Gene3D" id="2.60.40.1690">
    <property type="entry name" value="Head and neck region of the ectodomain of NDV fusion glycoprotein"/>
    <property type="match status" value="1"/>
</dbReference>
<dbReference type="Gene3D" id="2.40.490.10">
    <property type="entry name" value="Newcastle disease virus like domain"/>
    <property type="match status" value="1"/>
</dbReference>
<dbReference type="InterPro" id="IPR000776">
    <property type="entry name" value="Fusion_F0_Paramyxovir"/>
</dbReference>
<dbReference type="Pfam" id="PF00523">
    <property type="entry name" value="Fusion_gly"/>
    <property type="match status" value="1"/>
</dbReference>
<dbReference type="SUPFAM" id="SSF69922">
    <property type="entry name" value="Head and neck region of the ectodomain of NDV fusion glycoprotein"/>
    <property type="match status" value="1"/>
</dbReference>
<dbReference type="SUPFAM" id="SSF58069">
    <property type="entry name" value="Virus ectodomain"/>
    <property type="match status" value="1"/>
</dbReference>
<proteinExistence type="inferred from homology"/>